<accession>Q9Y7R4</accession>
<keyword id="KW-0156">Chromatin regulator</keyword>
<keyword id="KW-0158">Chromosome</keyword>
<keyword id="KW-0489">Methyltransferase</keyword>
<keyword id="KW-0539">Nucleus</keyword>
<keyword id="KW-1185">Reference proteome</keyword>
<keyword id="KW-0694">RNA-binding</keyword>
<keyword id="KW-0949">S-adenosyl-L-methionine</keyword>
<keyword id="KW-0808">Transferase</keyword>
<dbReference type="EC" id="2.1.1.354" evidence="8"/>
<dbReference type="EMBL" id="CU329672">
    <property type="protein sequence ID" value="CAB41652.1"/>
    <property type="molecule type" value="Genomic_DNA"/>
</dbReference>
<dbReference type="PIR" id="T41282">
    <property type="entry name" value="T41282"/>
</dbReference>
<dbReference type="RefSeq" id="NP_587812.1">
    <property type="nucleotide sequence ID" value="NM_001022805.2"/>
</dbReference>
<dbReference type="SMR" id="Q9Y7R4"/>
<dbReference type="BioGRID" id="275345">
    <property type="interactions" value="365"/>
</dbReference>
<dbReference type="ComplexPortal" id="CPX-10325">
    <property type="entry name" value="COMPASS complex"/>
</dbReference>
<dbReference type="ELM" id="Q9Y7R4"/>
<dbReference type="FunCoup" id="Q9Y7R4">
    <property type="interactions" value="74"/>
</dbReference>
<dbReference type="IntAct" id="Q9Y7R4">
    <property type="interactions" value="1"/>
</dbReference>
<dbReference type="STRING" id="284812.Q9Y7R4"/>
<dbReference type="iPTMnet" id="Q9Y7R4"/>
<dbReference type="PaxDb" id="4896-SPCC306.04c.1"/>
<dbReference type="EnsemblFungi" id="SPCC306.04c.1">
    <property type="protein sequence ID" value="SPCC306.04c.1:pep"/>
    <property type="gene ID" value="SPCC306.04c"/>
</dbReference>
<dbReference type="GeneID" id="2538762"/>
<dbReference type="KEGG" id="spo:2538762"/>
<dbReference type="PomBase" id="SPCC306.04c">
    <property type="gene designation" value="set1"/>
</dbReference>
<dbReference type="VEuPathDB" id="FungiDB:SPCC306.04c"/>
<dbReference type="eggNOG" id="KOG1080">
    <property type="taxonomic scope" value="Eukaryota"/>
</dbReference>
<dbReference type="HOGENOM" id="CLU_004391_1_0_1"/>
<dbReference type="InParanoid" id="Q9Y7R4"/>
<dbReference type="OMA" id="ERLPCLC"/>
<dbReference type="PhylomeDB" id="Q9Y7R4"/>
<dbReference type="Reactome" id="R-SPO-3214841">
    <property type="pathway name" value="PKMTs methylate histone lysines"/>
</dbReference>
<dbReference type="Reactome" id="R-SPO-9772755">
    <property type="pathway name" value="Formation of WDR5-containing histone-modifying complexes"/>
</dbReference>
<dbReference type="PRO" id="PR:Q9Y7R4"/>
<dbReference type="Proteomes" id="UP000002485">
    <property type="component" value="Chromosome III"/>
</dbReference>
<dbReference type="GO" id="GO:0000785">
    <property type="term" value="C:chromatin"/>
    <property type="evidence" value="ECO:0000305"/>
    <property type="project" value="PomBase"/>
</dbReference>
<dbReference type="GO" id="GO:0005737">
    <property type="term" value="C:cytoplasm"/>
    <property type="evidence" value="ECO:0007005"/>
    <property type="project" value="PomBase"/>
</dbReference>
<dbReference type="GO" id="GO:0048188">
    <property type="term" value="C:Set1C/COMPASS complex"/>
    <property type="evidence" value="ECO:0000314"/>
    <property type="project" value="PomBase"/>
</dbReference>
<dbReference type="GO" id="GO:0042800">
    <property type="term" value="F:histone H3K4 methyltransferase activity"/>
    <property type="evidence" value="ECO:0000314"/>
    <property type="project" value="PomBase"/>
</dbReference>
<dbReference type="GO" id="GO:0140999">
    <property type="term" value="F:histone H3K4 trimethyltransferase activity"/>
    <property type="evidence" value="ECO:0000315"/>
    <property type="project" value="PomBase"/>
</dbReference>
<dbReference type="GO" id="GO:0003723">
    <property type="term" value="F:RNA binding"/>
    <property type="evidence" value="ECO:0000250"/>
    <property type="project" value="UniProtKB"/>
</dbReference>
<dbReference type="GO" id="GO:0032259">
    <property type="term" value="P:methylation"/>
    <property type="evidence" value="ECO:0007669"/>
    <property type="project" value="UniProtKB-KW"/>
</dbReference>
<dbReference type="GO" id="GO:1902794">
    <property type="term" value="P:siRNA-independent facultative heterochromatin formation"/>
    <property type="evidence" value="ECO:0000315"/>
    <property type="project" value="PomBase"/>
</dbReference>
<dbReference type="GO" id="GO:0045815">
    <property type="term" value="P:transcription initiation-coupled chromatin remodeling"/>
    <property type="evidence" value="ECO:0000305"/>
    <property type="project" value="PomBase"/>
</dbReference>
<dbReference type="GO" id="GO:0141005">
    <property type="term" value="P:transposable element silencing by heterochromatin formation"/>
    <property type="evidence" value="ECO:0000269"/>
    <property type="project" value="PomBase"/>
</dbReference>
<dbReference type="CDD" id="cd00590">
    <property type="entry name" value="RRM_SF"/>
    <property type="match status" value="1"/>
</dbReference>
<dbReference type="CDD" id="cd12303">
    <property type="entry name" value="RRM_spSet1p_like"/>
    <property type="match status" value="1"/>
</dbReference>
<dbReference type="CDD" id="cd20072">
    <property type="entry name" value="SET_SET1"/>
    <property type="match status" value="1"/>
</dbReference>
<dbReference type="FunFam" id="2.170.270.10:FF:000010">
    <property type="entry name" value="Histone-lysine N-methyltransferase"/>
    <property type="match status" value="1"/>
</dbReference>
<dbReference type="Gene3D" id="3.30.70.330">
    <property type="match status" value="1"/>
</dbReference>
<dbReference type="Gene3D" id="2.170.270.10">
    <property type="entry name" value="SET domain"/>
    <property type="match status" value="1"/>
</dbReference>
<dbReference type="InterPro" id="IPR024657">
    <property type="entry name" value="COMPASS_Set1_N-SET"/>
</dbReference>
<dbReference type="InterPro" id="IPR012677">
    <property type="entry name" value="Nucleotide-bd_a/b_plait_sf"/>
</dbReference>
<dbReference type="InterPro" id="IPR003616">
    <property type="entry name" value="Post-SET_dom"/>
</dbReference>
<dbReference type="InterPro" id="IPR035979">
    <property type="entry name" value="RBD_domain_sf"/>
</dbReference>
<dbReference type="InterPro" id="IPR000504">
    <property type="entry name" value="RRM_dom"/>
</dbReference>
<dbReference type="InterPro" id="IPR044570">
    <property type="entry name" value="Set1-like"/>
</dbReference>
<dbReference type="InterPro" id="IPR017111">
    <property type="entry name" value="Set1_fungi"/>
</dbReference>
<dbReference type="InterPro" id="IPR024636">
    <property type="entry name" value="SET_assoc"/>
</dbReference>
<dbReference type="InterPro" id="IPR001214">
    <property type="entry name" value="SET_dom"/>
</dbReference>
<dbReference type="InterPro" id="IPR046341">
    <property type="entry name" value="SET_dom_sf"/>
</dbReference>
<dbReference type="PANTHER" id="PTHR45814">
    <property type="entry name" value="HISTONE-LYSINE N-METHYLTRANSFERASE SETD1"/>
    <property type="match status" value="1"/>
</dbReference>
<dbReference type="PANTHER" id="PTHR45814:SF2">
    <property type="entry name" value="HISTONE-LYSINE N-METHYLTRANSFERASE SETD1"/>
    <property type="match status" value="1"/>
</dbReference>
<dbReference type="Pfam" id="PF11764">
    <property type="entry name" value="N-SET"/>
    <property type="match status" value="1"/>
</dbReference>
<dbReference type="Pfam" id="PF00076">
    <property type="entry name" value="RRM_1"/>
    <property type="match status" value="1"/>
</dbReference>
<dbReference type="Pfam" id="PF00856">
    <property type="entry name" value="SET"/>
    <property type="match status" value="1"/>
</dbReference>
<dbReference type="Pfam" id="PF11767">
    <property type="entry name" value="SET_assoc"/>
    <property type="match status" value="1"/>
</dbReference>
<dbReference type="PIRSF" id="PIRSF037104">
    <property type="entry name" value="Histone_H3-K4_mtfrase_Set1_fun"/>
    <property type="match status" value="1"/>
</dbReference>
<dbReference type="SMART" id="SM01291">
    <property type="entry name" value="N-SET"/>
    <property type="match status" value="1"/>
</dbReference>
<dbReference type="SMART" id="SM00508">
    <property type="entry name" value="PostSET"/>
    <property type="match status" value="1"/>
</dbReference>
<dbReference type="SMART" id="SM00360">
    <property type="entry name" value="RRM"/>
    <property type="match status" value="2"/>
</dbReference>
<dbReference type="SMART" id="SM00317">
    <property type="entry name" value="SET"/>
    <property type="match status" value="1"/>
</dbReference>
<dbReference type="SUPFAM" id="SSF54928">
    <property type="entry name" value="RNA-binding domain, RBD"/>
    <property type="match status" value="2"/>
</dbReference>
<dbReference type="SUPFAM" id="SSF82199">
    <property type="entry name" value="SET domain"/>
    <property type="match status" value="1"/>
</dbReference>
<dbReference type="PROSITE" id="PS50868">
    <property type="entry name" value="POST_SET"/>
    <property type="match status" value="1"/>
</dbReference>
<dbReference type="PROSITE" id="PS50102">
    <property type="entry name" value="RRM"/>
    <property type="match status" value="1"/>
</dbReference>
<dbReference type="PROSITE" id="PS51572">
    <property type="entry name" value="SAM_MT43_1"/>
    <property type="match status" value="1"/>
</dbReference>
<dbReference type="PROSITE" id="PS50280">
    <property type="entry name" value="SET"/>
    <property type="match status" value="1"/>
</dbReference>
<gene>
    <name evidence="11" type="primary">set1</name>
    <name type="synonym">kmt2</name>
    <name type="ORF">SPCC306.04c</name>
</gene>
<feature type="chain" id="PRO_0000186085" description="Histone-lysine N-methyltransferase, H3 lysine-4 specific">
    <location>
        <begin position="1"/>
        <end position="920"/>
    </location>
</feature>
<feature type="domain" description="RRM" evidence="3">
    <location>
        <begin position="94"/>
        <end position="179"/>
    </location>
</feature>
<feature type="domain" description="SET" evidence="4">
    <location>
        <begin position="781"/>
        <end position="898"/>
    </location>
</feature>
<feature type="domain" description="Post-SET" evidence="2">
    <location>
        <begin position="904"/>
        <end position="920"/>
    </location>
</feature>
<feature type="region of interest" description="Disordered" evidence="5">
    <location>
        <begin position="205"/>
        <end position="242"/>
    </location>
</feature>
<feature type="region of interest" description="Disordered" evidence="5">
    <location>
        <begin position="448"/>
        <end position="485"/>
    </location>
</feature>
<feature type="short sequence motif" description="RxxxRR motif" evidence="1">
    <location>
        <begin position="749"/>
        <end position="754"/>
    </location>
</feature>
<feature type="compositionally biased region" description="Basic and acidic residues" evidence="5">
    <location>
        <begin position="205"/>
        <end position="216"/>
    </location>
</feature>
<feature type="compositionally biased region" description="Polar residues" evidence="5">
    <location>
        <begin position="233"/>
        <end position="242"/>
    </location>
</feature>
<feature type="compositionally biased region" description="Polar residues" evidence="5">
    <location>
        <begin position="453"/>
        <end position="462"/>
    </location>
</feature>
<feature type="compositionally biased region" description="Basic residues" evidence="5">
    <location>
        <begin position="463"/>
        <end position="476"/>
    </location>
</feature>
<feature type="binding site" evidence="4">
    <location>
        <position position="897"/>
    </location>
    <ligand>
        <name>S-adenosyl-L-methionine</name>
        <dbReference type="ChEBI" id="CHEBI:59789"/>
    </ligand>
</feature>
<reference evidence="11" key="1">
    <citation type="journal article" date="2002" name="Nature">
        <title>The genome sequence of Schizosaccharomyces pombe.</title>
        <authorList>
            <person name="Wood V."/>
            <person name="Gwilliam R."/>
            <person name="Rajandream M.A."/>
            <person name="Lyne M.H."/>
            <person name="Lyne R."/>
            <person name="Stewart A."/>
            <person name="Sgouros J.G."/>
            <person name="Peat N."/>
            <person name="Hayles J."/>
            <person name="Baker S.G."/>
            <person name="Basham D."/>
            <person name="Bowman S."/>
            <person name="Brooks K."/>
            <person name="Brown D."/>
            <person name="Brown S."/>
            <person name="Chillingworth T."/>
            <person name="Churcher C.M."/>
            <person name="Collins M."/>
            <person name="Connor R."/>
            <person name="Cronin A."/>
            <person name="Davis P."/>
            <person name="Feltwell T."/>
            <person name="Fraser A."/>
            <person name="Gentles S."/>
            <person name="Goble A."/>
            <person name="Hamlin N."/>
            <person name="Harris D.E."/>
            <person name="Hidalgo J."/>
            <person name="Hodgson G."/>
            <person name="Holroyd S."/>
            <person name="Hornsby T."/>
            <person name="Howarth S."/>
            <person name="Huckle E.J."/>
            <person name="Hunt S."/>
            <person name="Jagels K."/>
            <person name="James K.D."/>
            <person name="Jones L."/>
            <person name="Jones M."/>
            <person name="Leather S."/>
            <person name="McDonald S."/>
            <person name="McLean J."/>
            <person name="Mooney P."/>
            <person name="Moule S."/>
            <person name="Mungall K.L."/>
            <person name="Murphy L.D."/>
            <person name="Niblett D."/>
            <person name="Odell C."/>
            <person name="Oliver K."/>
            <person name="O'Neil S."/>
            <person name="Pearson D."/>
            <person name="Quail M.A."/>
            <person name="Rabbinowitsch E."/>
            <person name="Rutherford K.M."/>
            <person name="Rutter S."/>
            <person name="Saunders D."/>
            <person name="Seeger K."/>
            <person name="Sharp S."/>
            <person name="Skelton J."/>
            <person name="Simmonds M.N."/>
            <person name="Squares R."/>
            <person name="Squares S."/>
            <person name="Stevens K."/>
            <person name="Taylor K."/>
            <person name="Taylor R.G."/>
            <person name="Tivey A."/>
            <person name="Walsh S.V."/>
            <person name="Warren T."/>
            <person name="Whitehead S."/>
            <person name="Woodward J.R."/>
            <person name="Volckaert G."/>
            <person name="Aert R."/>
            <person name="Robben J."/>
            <person name="Grymonprez B."/>
            <person name="Weltjens I."/>
            <person name="Vanstreels E."/>
            <person name="Rieger M."/>
            <person name="Schaefer M."/>
            <person name="Mueller-Auer S."/>
            <person name="Gabel C."/>
            <person name="Fuchs M."/>
            <person name="Duesterhoeft A."/>
            <person name="Fritzc C."/>
            <person name="Holzer E."/>
            <person name="Moestl D."/>
            <person name="Hilbert H."/>
            <person name="Borzym K."/>
            <person name="Langer I."/>
            <person name="Beck A."/>
            <person name="Lehrach H."/>
            <person name="Reinhardt R."/>
            <person name="Pohl T.M."/>
            <person name="Eger P."/>
            <person name="Zimmermann W."/>
            <person name="Wedler H."/>
            <person name="Wambutt R."/>
            <person name="Purnelle B."/>
            <person name="Goffeau A."/>
            <person name="Cadieu E."/>
            <person name="Dreano S."/>
            <person name="Gloux S."/>
            <person name="Lelaure V."/>
            <person name="Mottier S."/>
            <person name="Galibert F."/>
            <person name="Aves S.J."/>
            <person name="Xiang Z."/>
            <person name="Hunt C."/>
            <person name="Moore K."/>
            <person name="Hurst S.M."/>
            <person name="Lucas M."/>
            <person name="Rochet M."/>
            <person name="Gaillardin C."/>
            <person name="Tallada V.A."/>
            <person name="Garzon A."/>
            <person name="Thode G."/>
            <person name="Daga R.R."/>
            <person name="Cruzado L."/>
            <person name="Jimenez J."/>
            <person name="Sanchez M."/>
            <person name="del Rey F."/>
            <person name="Benito J."/>
            <person name="Dominguez A."/>
            <person name="Revuelta J.L."/>
            <person name="Moreno S."/>
            <person name="Armstrong J."/>
            <person name="Forsburg S.L."/>
            <person name="Cerutti L."/>
            <person name="Lowe T."/>
            <person name="McCombie W.R."/>
            <person name="Paulsen I."/>
            <person name="Potashkin J."/>
            <person name="Shpakovski G.V."/>
            <person name="Ussery D."/>
            <person name="Barrell B.G."/>
            <person name="Nurse P."/>
        </authorList>
    </citation>
    <scope>NUCLEOTIDE SEQUENCE [LARGE SCALE GENOMIC DNA]</scope>
    <source>
        <strain>972 / ATCC 24843</strain>
    </source>
</reference>
<reference evidence="10" key="2">
    <citation type="journal article" date="2002" name="Proc. Natl. Acad. Sci. U.S.A.">
        <title>Histone H3 lysine 4 methylation is mediated by Set1 and promotes maintenance of active chromatin states in fission yeast.</title>
        <authorList>
            <person name="Noma K."/>
            <person name="Grewal S.I.S."/>
        </authorList>
    </citation>
    <scope>FUNCTION</scope>
</reference>
<reference evidence="10" key="3">
    <citation type="journal article" date="2003" name="J. Biol. Chem.">
        <title>High conservation of the Set1/Rad6 axis of histone 3 lysine 4 methylation in budding and fission yeasts.</title>
        <authorList>
            <person name="Roguev A."/>
            <person name="Schaft D."/>
            <person name="Shevchenko A."/>
            <person name="Aasland R."/>
            <person name="Shevchenko A."/>
            <person name="Stewart A.F."/>
        </authorList>
    </citation>
    <scope>FUNCTION</scope>
    <scope>IDENTIFICATION IN THE SET1 COMPLEX</scope>
</reference>
<reference evidence="10" key="4">
    <citation type="journal article" date="2003" name="J. Mol. Biol.">
        <title>The fission yeast spSet1p is a histone H3-K4 methyltransferase that functions in telomere maintenance and DNA repair in an ATM kinase Rad3-dependent pathway.</title>
        <authorList>
            <person name="Kanoh J."/>
            <person name="Francesconi S."/>
            <person name="Collura A."/>
            <person name="Schramke V."/>
            <person name="Ishikawa F."/>
            <person name="Baldacci G."/>
            <person name="Geli V."/>
        </authorList>
    </citation>
    <scope>FUNCTION</scope>
    <scope>CATALYTIC ACTIVITY</scope>
</reference>
<reference evidence="10" key="5">
    <citation type="journal article" date="2004" name="Mol. Cell. Proteomics">
        <title>A comparative analysis of an orthologous proteomic environment in the yeasts Saccharomyces cerevisiae and Schizosaccharomyces pombe.</title>
        <authorList>
            <person name="Roguev A."/>
            <person name="Shevchenko A."/>
            <person name="Schaft D."/>
            <person name="Thomas H."/>
            <person name="Stewart A.F."/>
            <person name="Shevchenko A."/>
        </authorList>
    </citation>
    <scope>IDENTIFICATION IN THE SET1 COMPLEX</scope>
</reference>
<protein>
    <recommendedName>
        <fullName>Histone-lysine N-methyltransferase, H3 lysine-4 specific</fullName>
        <ecNumber evidence="8">2.1.1.354</ecNumber>
    </recommendedName>
    <alternativeName>
        <fullName>COMPASS component set1</fullName>
    </alternativeName>
    <alternativeName>
        <fullName>Lysine N-methyltransferase 2</fullName>
    </alternativeName>
    <alternativeName>
        <fullName>SET domain-containing protein 1</fullName>
    </alternativeName>
    <alternativeName>
        <fullName>Set1 complex component set1</fullName>
        <shortName>Set1C component set1</shortName>
    </alternativeName>
    <alternativeName>
        <fullName>Spset1</fullName>
    </alternativeName>
</protein>
<organism>
    <name type="scientific">Schizosaccharomyces pombe (strain 972 / ATCC 24843)</name>
    <name type="common">Fission yeast</name>
    <dbReference type="NCBI Taxonomy" id="284812"/>
    <lineage>
        <taxon>Eukaryota</taxon>
        <taxon>Fungi</taxon>
        <taxon>Dikarya</taxon>
        <taxon>Ascomycota</taxon>
        <taxon>Taphrinomycotina</taxon>
        <taxon>Schizosaccharomycetes</taxon>
        <taxon>Schizosaccharomycetales</taxon>
        <taxon>Schizosaccharomycetaceae</taxon>
        <taxon>Schizosaccharomyces</taxon>
    </lineage>
</organism>
<name>SET1_SCHPO</name>
<proteinExistence type="evidence at protein level"/>
<sequence>MDFNTSTRSKSQPVQRNNYKVLYDPELGIKENLGRKIIYRFNGVSKPPLVVRDPRLKNPIYARGIPKSGRPFLKSLQTINYDYNENSLGPEPPTQVFVSNISPLVTSEQLRYHFKSFGEVFDLDLKLNPYTGTSLGLCCISFDKRSSISVAAHSAKIAVQQANGLRFSGKPLSVVLDRDGSLCEEAFKKALNAVEKQFQEETLQKQRFEREDESSRQKLSAAMNEDIPPWRQPSKNSQTLSNGDLQHSKVQNVDQKSGFLTSSETDVPKNINDYIYLLIDDRFVPPDRVYYTDIKHHFRKFLYEKIYMNKDGFYITFNNYREASNCYRALDRTYVQNCRIKLKFHDIPSRTKEDGKKSAVRRVVLPPEEAYAEATSVVLRDLEAALLRDVKSKIIGPAIFKYLHSMPKPSVKEELQENLLVSSTSVPDVPLKIESTVGKLPSLPKFKKRVDSSKMNLSAGSKTKSKLQRRRRRRHEARPLHYQLNQMYNSSASEAESDQELLLSSGDERVERGKIGSIKSVKSDEATPVFSDTSDENDKFHRFRTKSKISKKKYEKMEVDYTSSSETESDASILSPSAAIPKSGSAIKDELISPKKEIDEVLALAPKWRINEFDETGSVYYGALPYNYPEDDVLLDLDGLQYLVKNDEDYSYLQEALKDEPLMDINDPNFWAYERKSCKFKNGDVKYGDTAILPEPKGYFRSNTSGSAKSEGYYIIPTTEKSLYLPLRNRSTIDTISHSTSRITSRMNRVNNRRLAAGVEKSQLPAEADLLRFNALKARKKQLHFGPSRIHTLGLFAMENIDKNDMVIEYIGEIIRQRVADNREKNYVREGIGDSYLFRIDEDVIVDATKKGNIARFINHSCAPNCIARIIRVEGKRKIVIYADRDIMHGEELTYDYKFPEEADKIPCLCGAPTCRGYLN</sequence>
<comment type="function">
    <text evidence="1 6 7 8">Catalytic component of the COMPASS (Set1C) complex that specifically mono-, di- and trimethylates histone H3 to form H3K4me1/2/3 (PubMed:12488447, PubMed:12589755). Binds RNA which might negatively affect its histone methyltransferase activity (By similarity). COMPASS recognizes ubiquitinated H2B on one face of the nucleosome which stimulates the methylation of H3 on the opposing face (By similarity). Methylation promotes maintenance of active chromatin states at euchromatic chromosomal domains and is present throughout the cell cycle (PubMed:12193658). Plays a role in telomere maintenance and DNA repair in an ATM kinase rad3-dependent pathway (PubMed:12589755). Required for efficient telomeric and centromeric silencing (PubMed:12589755).</text>
</comment>
<comment type="catalytic activity">
    <reaction evidence="8">
        <text>L-lysyl(4)-[histone H3] + 3 S-adenosyl-L-methionine = N(6),N(6),N(6)-trimethyl-L-lysyl(4)-[histone H3] + 3 S-adenosyl-L-homocysteine + 3 H(+)</text>
        <dbReference type="Rhea" id="RHEA:60260"/>
        <dbReference type="Rhea" id="RHEA-COMP:15537"/>
        <dbReference type="Rhea" id="RHEA-COMP:15547"/>
        <dbReference type="ChEBI" id="CHEBI:15378"/>
        <dbReference type="ChEBI" id="CHEBI:29969"/>
        <dbReference type="ChEBI" id="CHEBI:57856"/>
        <dbReference type="ChEBI" id="CHEBI:59789"/>
        <dbReference type="ChEBI" id="CHEBI:61961"/>
        <dbReference type="EC" id="2.1.1.354"/>
    </reaction>
</comment>
<comment type="catalytic activity">
    <reaction evidence="1">
        <text>N(6)-methyl-L-lysyl(4)-[histone H3] + S-adenosyl-L-methionine = N(6),N(6)-dimethyl-L-lysyl(4)-[histone H3] + S-adenosyl-L-homocysteine + H(+)</text>
        <dbReference type="Rhea" id="RHEA:60268"/>
        <dbReference type="Rhea" id="RHEA-COMP:15540"/>
        <dbReference type="Rhea" id="RHEA-COMP:15543"/>
        <dbReference type="ChEBI" id="CHEBI:15378"/>
        <dbReference type="ChEBI" id="CHEBI:57856"/>
        <dbReference type="ChEBI" id="CHEBI:59789"/>
        <dbReference type="ChEBI" id="CHEBI:61929"/>
        <dbReference type="ChEBI" id="CHEBI:61976"/>
    </reaction>
</comment>
<comment type="catalytic activity">
    <reaction evidence="1">
        <text>N(6),N(6)-dimethyl-L-lysyl(4)-[histone H3] + S-adenosyl-L-methionine = N(6),N(6),N(6)-trimethyl-L-lysyl(4)-[histone H3] + S-adenosyl-L-homocysteine + H(+)</text>
        <dbReference type="Rhea" id="RHEA:60272"/>
        <dbReference type="Rhea" id="RHEA-COMP:15537"/>
        <dbReference type="Rhea" id="RHEA-COMP:15540"/>
        <dbReference type="ChEBI" id="CHEBI:15378"/>
        <dbReference type="ChEBI" id="CHEBI:57856"/>
        <dbReference type="ChEBI" id="CHEBI:59789"/>
        <dbReference type="ChEBI" id="CHEBI:61961"/>
        <dbReference type="ChEBI" id="CHEBI:61976"/>
    </reaction>
</comment>
<comment type="subunit">
    <text evidence="7 9">Component of the Set1C/COMPASS complex composed of ash2, sdc1, set1, shg1, spp1, swd1, swd2 and swd3.</text>
</comment>
<comment type="interaction">
    <interactant intactId="EBI-2106005">
        <id>Q9Y7R4</id>
    </interactant>
    <interactant intactId="EBI-2105919">
        <id>Q9HDV4</id>
        <label>lid2</label>
    </interactant>
    <organismsDiffer>false</organismsDiffer>
    <experiments>2</experiments>
</comment>
<comment type="subcellular location">
    <subcellularLocation>
        <location evidence="10">Nucleus</location>
    </subcellularLocation>
    <subcellularLocation>
        <location evidence="10">Chromosome</location>
    </subcellularLocation>
</comment>
<comment type="domain">
    <text>A construct containing set1 C-terminal fragment of 692-920 is able to form H3K4me.</text>
</comment>
<comment type="domain">
    <text evidence="1">The RxxxRR motif forms an adapter helix that bridges the nucleosome and ubiquitin.</text>
</comment>
<comment type="similarity">
    <text evidence="4">Belongs to the class V-like SAM-binding methyltransferase superfamily.</text>
</comment>
<evidence type="ECO:0000250" key="1">
    <source>
        <dbReference type="UniProtKB" id="P38827"/>
    </source>
</evidence>
<evidence type="ECO:0000255" key="2">
    <source>
        <dbReference type="PROSITE-ProRule" id="PRU00155"/>
    </source>
</evidence>
<evidence type="ECO:0000255" key="3">
    <source>
        <dbReference type="PROSITE-ProRule" id="PRU00176"/>
    </source>
</evidence>
<evidence type="ECO:0000255" key="4">
    <source>
        <dbReference type="PROSITE-ProRule" id="PRU00190"/>
    </source>
</evidence>
<evidence type="ECO:0000256" key="5">
    <source>
        <dbReference type="SAM" id="MobiDB-lite"/>
    </source>
</evidence>
<evidence type="ECO:0000269" key="6">
    <source>
    </source>
</evidence>
<evidence type="ECO:0000269" key="7">
    <source>
    </source>
</evidence>
<evidence type="ECO:0000269" key="8">
    <source>
    </source>
</evidence>
<evidence type="ECO:0000269" key="9">
    <source>
    </source>
</evidence>
<evidence type="ECO:0000305" key="10"/>
<evidence type="ECO:0000312" key="11">
    <source>
        <dbReference type="EMBL" id="CAB41652.1"/>
    </source>
</evidence>